<reference key="1">
    <citation type="journal article" date="2001" name="DNA Res.">
        <title>Complete genomic sequence of the filamentous nitrogen-fixing cyanobacterium Anabaena sp. strain PCC 7120.</title>
        <authorList>
            <person name="Kaneko T."/>
            <person name="Nakamura Y."/>
            <person name="Wolk C.P."/>
            <person name="Kuritz T."/>
            <person name="Sasamoto S."/>
            <person name="Watanabe A."/>
            <person name="Iriguchi M."/>
            <person name="Ishikawa A."/>
            <person name="Kawashima K."/>
            <person name="Kimura T."/>
            <person name="Kishida Y."/>
            <person name="Kohara M."/>
            <person name="Matsumoto M."/>
            <person name="Matsuno A."/>
            <person name="Muraki A."/>
            <person name="Nakazaki N."/>
            <person name="Shimpo S."/>
            <person name="Sugimoto M."/>
            <person name="Takazawa M."/>
            <person name="Yamada M."/>
            <person name="Yasuda M."/>
            <person name="Tabata S."/>
        </authorList>
    </citation>
    <scope>NUCLEOTIDE SEQUENCE [LARGE SCALE GENOMIC DNA]</scope>
    <source>
        <strain>PCC 7120 / SAG 25.82 / UTEX 2576</strain>
    </source>
</reference>
<sequence length="184" mass="20442">MTRLIFLGPPGAGKGTQAQILAEHLHIPHISTGDILRQAMKEQTPLGIKAQSYVDSGELVPDQLVQDLVEERLEQADAKSGWILDGFPRKVTQAAFLEELLQKTGQGGERVVNLDAADDVVVARLLSRGRKDDTEEVIRRRLEIYRSDTAPLIDYYSDRQKLLTINGDQSQEEVTHELKATLGS</sequence>
<name>KAD1_NOSS1</name>
<dbReference type="EC" id="2.7.4.3" evidence="1"/>
<dbReference type="EMBL" id="BA000019">
    <property type="protein sequence ID" value="BAB75895.1"/>
    <property type="molecule type" value="Genomic_DNA"/>
</dbReference>
<dbReference type="PIR" id="AE2330">
    <property type="entry name" value="AE2330"/>
</dbReference>
<dbReference type="RefSeq" id="WP_010998334.1">
    <property type="nucleotide sequence ID" value="NZ_RSCN01000010.1"/>
</dbReference>
<dbReference type="SMR" id="Q8YPJ8"/>
<dbReference type="STRING" id="103690.gene:10496245"/>
<dbReference type="KEGG" id="ana:all4196"/>
<dbReference type="eggNOG" id="COG0563">
    <property type="taxonomic scope" value="Bacteria"/>
</dbReference>
<dbReference type="OrthoDB" id="9805030at2"/>
<dbReference type="UniPathway" id="UPA00588">
    <property type="reaction ID" value="UER00649"/>
</dbReference>
<dbReference type="Proteomes" id="UP000002483">
    <property type="component" value="Chromosome"/>
</dbReference>
<dbReference type="GO" id="GO:0005737">
    <property type="term" value="C:cytoplasm"/>
    <property type="evidence" value="ECO:0007669"/>
    <property type="project" value="UniProtKB-SubCell"/>
</dbReference>
<dbReference type="GO" id="GO:0004017">
    <property type="term" value="F:adenylate kinase activity"/>
    <property type="evidence" value="ECO:0007669"/>
    <property type="project" value="UniProtKB-UniRule"/>
</dbReference>
<dbReference type="GO" id="GO:0005524">
    <property type="term" value="F:ATP binding"/>
    <property type="evidence" value="ECO:0007669"/>
    <property type="project" value="UniProtKB-UniRule"/>
</dbReference>
<dbReference type="GO" id="GO:0044209">
    <property type="term" value="P:AMP salvage"/>
    <property type="evidence" value="ECO:0007669"/>
    <property type="project" value="UniProtKB-UniRule"/>
</dbReference>
<dbReference type="CDD" id="cd01428">
    <property type="entry name" value="ADK"/>
    <property type="match status" value="1"/>
</dbReference>
<dbReference type="Gene3D" id="3.40.50.300">
    <property type="entry name" value="P-loop containing nucleotide triphosphate hydrolases"/>
    <property type="match status" value="1"/>
</dbReference>
<dbReference type="HAMAP" id="MF_00235">
    <property type="entry name" value="Adenylate_kinase_Adk"/>
    <property type="match status" value="1"/>
</dbReference>
<dbReference type="InterPro" id="IPR000850">
    <property type="entry name" value="Adenylat/UMP-CMP_kin"/>
</dbReference>
<dbReference type="InterPro" id="IPR033690">
    <property type="entry name" value="Adenylat_kinase_CS"/>
</dbReference>
<dbReference type="InterPro" id="IPR027417">
    <property type="entry name" value="P-loop_NTPase"/>
</dbReference>
<dbReference type="NCBIfam" id="NF001381">
    <property type="entry name" value="PRK00279.1-3"/>
    <property type="match status" value="1"/>
</dbReference>
<dbReference type="NCBIfam" id="NF002700">
    <property type="entry name" value="PRK02496.1"/>
    <property type="match status" value="1"/>
</dbReference>
<dbReference type="NCBIfam" id="NF011100">
    <property type="entry name" value="PRK14527.1"/>
    <property type="match status" value="1"/>
</dbReference>
<dbReference type="NCBIfam" id="NF011101">
    <property type="entry name" value="PRK14528.1"/>
    <property type="match status" value="1"/>
</dbReference>
<dbReference type="NCBIfam" id="NF011104">
    <property type="entry name" value="PRK14531.1"/>
    <property type="match status" value="1"/>
</dbReference>
<dbReference type="NCBIfam" id="NF011105">
    <property type="entry name" value="PRK14532.1"/>
    <property type="match status" value="1"/>
</dbReference>
<dbReference type="PANTHER" id="PTHR23359">
    <property type="entry name" value="NUCLEOTIDE KINASE"/>
    <property type="match status" value="1"/>
</dbReference>
<dbReference type="Pfam" id="PF00406">
    <property type="entry name" value="ADK"/>
    <property type="match status" value="1"/>
</dbReference>
<dbReference type="PRINTS" id="PR00094">
    <property type="entry name" value="ADENYLTKNASE"/>
</dbReference>
<dbReference type="SUPFAM" id="SSF52540">
    <property type="entry name" value="P-loop containing nucleoside triphosphate hydrolases"/>
    <property type="match status" value="1"/>
</dbReference>
<dbReference type="PROSITE" id="PS00113">
    <property type="entry name" value="ADENYLATE_KINASE"/>
    <property type="match status" value="1"/>
</dbReference>
<protein>
    <recommendedName>
        <fullName evidence="1">Adenylate kinase 1</fullName>
        <shortName evidence="1">AK 1</shortName>
        <ecNumber evidence="1">2.7.4.3</ecNumber>
    </recommendedName>
    <alternativeName>
        <fullName evidence="1">ATP-AMP transphosphorylase 1</fullName>
    </alternativeName>
    <alternativeName>
        <fullName evidence="1">ATP:AMP phosphotransferase 1</fullName>
    </alternativeName>
    <alternativeName>
        <fullName evidence="1">Adenylate monophosphate kinase 1</fullName>
    </alternativeName>
</protein>
<organism>
    <name type="scientific">Nostoc sp. (strain PCC 7120 / SAG 25.82 / UTEX 2576)</name>
    <dbReference type="NCBI Taxonomy" id="103690"/>
    <lineage>
        <taxon>Bacteria</taxon>
        <taxon>Bacillati</taxon>
        <taxon>Cyanobacteriota</taxon>
        <taxon>Cyanophyceae</taxon>
        <taxon>Nostocales</taxon>
        <taxon>Nostocaceae</taxon>
        <taxon>Nostoc</taxon>
    </lineage>
</organism>
<accession>Q8YPJ8</accession>
<keyword id="KW-0067">ATP-binding</keyword>
<keyword id="KW-0963">Cytoplasm</keyword>
<keyword id="KW-0418">Kinase</keyword>
<keyword id="KW-0545">Nucleotide biosynthesis</keyword>
<keyword id="KW-0547">Nucleotide-binding</keyword>
<keyword id="KW-1185">Reference proteome</keyword>
<keyword id="KW-0808">Transferase</keyword>
<gene>
    <name evidence="1" type="primary">adk1</name>
    <name type="ordered locus">all4196</name>
</gene>
<proteinExistence type="inferred from homology"/>
<comment type="function">
    <text evidence="1">Catalyzes the reversible transfer of the terminal phosphate group between ATP and AMP. Plays an important role in cellular energy homeostasis and in adenine nucleotide metabolism.</text>
</comment>
<comment type="catalytic activity">
    <reaction evidence="1">
        <text>AMP + ATP = 2 ADP</text>
        <dbReference type="Rhea" id="RHEA:12973"/>
        <dbReference type="ChEBI" id="CHEBI:30616"/>
        <dbReference type="ChEBI" id="CHEBI:456215"/>
        <dbReference type="ChEBI" id="CHEBI:456216"/>
        <dbReference type="EC" id="2.7.4.3"/>
    </reaction>
</comment>
<comment type="pathway">
    <text evidence="1">Purine metabolism; AMP biosynthesis via salvage pathway; AMP from ADP: step 1/1.</text>
</comment>
<comment type="subunit">
    <text evidence="1">Monomer.</text>
</comment>
<comment type="subcellular location">
    <subcellularLocation>
        <location evidence="1">Cytoplasm</location>
    </subcellularLocation>
</comment>
<comment type="domain">
    <text evidence="1">Consists of three domains, a large central CORE domain and two small peripheral domains, NMPbind and LID, which undergo movements during catalysis. The LID domain closes over the site of phosphoryl transfer upon ATP binding. Assembling and dissambling the active center during each catalytic cycle provides an effective means to prevent ATP hydrolysis.</text>
</comment>
<comment type="similarity">
    <text evidence="1">Belongs to the adenylate kinase family.</text>
</comment>
<evidence type="ECO:0000255" key="1">
    <source>
        <dbReference type="HAMAP-Rule" id="MF_00235"/>
    </source>
</evidence>
<feature type="chain" id="PRO_0000158716" description="Adenylate kinase 1">
    <location>
        <begin position="1"/>
        <end position="184"/>
    </location>
</feature>
<feature type="region of interest" description="NMP" evidence="1">
    <location>
        <begin position="31"/>
        <end position="60"/>
    </location>
</feature>
<feature type="region of interest" description="LID" evidence="1">
    <location>
        <begin position="127"/>
        <end position="133"/>
    </location>
</feature>
<feature type="binding site" evidence="1">
    <location>
        <begin position="11"/>
        <end position="16"/>
    </location>
    <ligand>
        <name>ATP</name>
        <dbReference type="ChEBI" id="CHEBI:30616"/>
    </ligand>
</feature>
<feature type="binding site" evidence="1">
    <location>
        <position position="32"/>
    </location>
    <ligand>
        <name>AMP</name>
        <dbReference type="ChEBI" id="CHEBI:456215"/>
    </ligand>
</feature>
<feature type="binding site" evidence="1">
    <location>
        <position position="37"/>
    </location>
    <ligand>
        <name>AMP</name>
        <dbReference type="ChEBI" id="CHEBI:456215"/>
    </ligand>
</feature>
<feature type="binding site" evidence="1">
    <location>
        <begin position="58"/>
        <end position="60"/>
    </location>
    <ligand>
        <name>AMP</name>
        <dbReference type="ChEBI" id="CHEBI:456215"/>
    </ligand>
</feature>
<feature type="binding site" evidence="1">
    <location>
        <begin position="86"/>
        <end position="89"/>
    </location>
    <ligand>
        <name>AMP</name>
        <dbReference type="ChEBI" id="CHEBI:456215"/>
    </ligand>
</feature>
<feature type="binding site" evidence="1">
    <location>
        <position position="93"/>
    </location>
    <ligand>
        <name>AMP</name>
        <dbReference type="ChEBI" id="CHEBI:456215"/>
    </ligand>
</feature>
<feature type="binding site" evidence="1">
    <location>
        <position position="128"/>
    </location>
    <ligand>
        <name>ATP</name>
        <dbReference type="ChEBI" id="CHEBI:30616"/>
    </ligand>
</feature>
<feature type="binding site" evidence="1">
    <location>
        <position position="130"/>
    </location>
    <ligand>
        <name>AMP</name>
        <dbReference type="ChEBI" id="CHEBI:456215"/>
    </ligand>
</feature>
<feature type="binding site" evidence="1">
    <location>
        <position position="141"/>
    </location>
    <ligand>
        <name>AMP</name>
        <dbReference type="ChEBI" id="CHEBI:456215"/>
    </ligand>
</feature>
<feature type="binding site" evidence="1">
    <location>
        <position position="169"/>
    </location>
    <ligand>
        <name>ATP</name>
        <dbReference type="ChEBI" id="CHEBI:30616"/>
    </ligand>
</feature>